<feature type="chain" id="PRO_0000381276" description="Biotin synthase">
    <location>
        <begin position="1"/>
        <end position="336"/>
    </location>
</feature>
<feature type="domain" description="Radical SAM core" evidence="2">
    <location>
        <begin position="54"/>
        <end position="281"/>
    </location>
</feature>
<feature type="binding site" evidence="1">
    <location>
        <position position="69"/>
    </location>
    <ligand>
        <name>[4Fe-4S] cluster</name>
        <dbReference type="ChEBI" id="CHEBI:49883"/>
        <note>4Fe-4S-S-AdoMet</note>
    </ligand>
</feature>
<feature type="binding site" evidence="1">
    <location>
        <position position="73"/>
    </location>
    <ligand>
        <name>[4Fe-4S] cluster</name>
        <dbReference type="ChEBI" id="CHEBI:49883"/>
        <note>4Fe-4S-S-AdoMet</note>
    </ligand>
</feature>
<feature type="binding site" evidence="1">
    <location>
        <position position="76"/>
    </location>
    <ligand>
        <name>[4Fe-4S] cluster</name>
        <dbReference type="ChEBI" id="CHEBI:49883"/>
        <note>4Fe-4S-S-AdoMet</note>
    </ligand>
</feature>
<feature type="binding site" evidence="1">
    <location>
        <position position="113"/>
    </location>
    <ligand>
        <name>[2Fe-2S] cluster</name>
        <dbReference type="ChEBI" id="CHEBI:190135"/>
    </ligand>
</feature>
<feature type="binding site" evidence="1">
    <location>
        <position position="144"/>
    </location>
    <ligand>
        <name>[2Fe-2S] cluster</name>
        <dbReference type="ChEBI" id="CHEBI:190135"/>
    </ligand>
</feature>
<feature type="binding site" evidence="1">
    <location>
        <position position="204"/>
    </location>
    <ligand>
        <name>[2Fe-2S] cluster</name>
        <dbReference type="ChEBI" id="CHEBI:190135"/>
    </ligand>
</feature>
<feature type="binding site" evidence="1">
    <location>
        <position position="276"/>
    </location>
    <ligand>
        <name>[2Fe-2S] cluster</name>
        <dbReference type="ChEBI" id="CHEBI:190135"/>
    </ligand>
</feature>
<sequence>MTEAQTACPTTETPVAAPVAPRWRVADVIALYELPFNDLLFRAQQTHREHFDANAIQLSTLLSIKTGGCEEDCGYCSQSAHHDTGLKAEKLMEVDAVLAAARTAKENGATRFCMGAAWRNPKDRHIEPIKEMIRGVKDMGLETCVTLGMLEEHQAKALAEAGLDYYNHNLDTSPEFYGQIISTRTYQDRLDTLERVRDAGINVCCGGIIGMGESRRERAGLIAQLANMNPYPESVPINNLVAIEGTPLENAQALDPFEFVRTIAVARITMPKAMVRLSAGREQLDDSMQALCFLAGANSMFYGDVLLTTGNPRAEADRKLLARLGMSATEATQLSA</sequence>
<gene>
    <name evidence="1" type="primary">bioB</name>
    <name type="ordered locus">BTH_I0337</name>
</gene>
<organism>
    <name type="scientific">Burkholderia thailandensis (strain ATCC 700388 / DSM 13276 / CCUG 48851 / CIP 106301 / E264)</name>
    <dbReference type="NCBI Taxonomy" id="271848"/>
    <lineage>
        <taxon>Bacteria</taxon>
        <taxon>Pseudomonadati</taxon>
        <taxon>Pseudomonadota</taxon>
        <taxon>Betaproteobacteria</taxon>
        <taxon>Burkholderiales</taxon>
        <taxon>Burkholderiaceae</taxon>
        <taxon>Burkholderia</taxon>
        <taxon>pseudomallei group</taxon>
    </lineage>
</organism>
<name>BIOB_BURTA</name>
<evidence type="ECO:0000255" key="1">
    <source>
        <dbReference type="HAMAP-Rule" id="MF_01694"/>
    </source>
</evidence>
<evidence type="ECO:0000255" key="2">
    <source>
        <dbReference type="PROSITE-ProRule" id="PRU01266"/>
    </source>
</evidence>
<evidence type="ECO:0000305" key="3"/>
<accession>Q2T1Q4</accession>
<proteinExistence type="inferred from homology"/>
<keyword id="KW-0001">2Fe-2S</keyword>
<keyword id="KW-0004">4Fe-4S</keyword>
<keyword id="KW-0093">Biotin biosynthesis</keyword>
<keyword id="KW-0408">Iron</keyword>
<keyword id="KW-0411">Iron-sulfur</keyword>
<keyword id="KW-0479">Metal-binding</keyword>
<keyword id="KW-0949">S-adenosyl-L-methionine</keyword>
<keyword id="KW-0808">Transferase</keyword>
<reference key="1">
    <citation type="journal article" date="2005" name="BMC Genomics">
        <title>Bacterial genome adaptation to niches: divergence of the potential virulence genes in three Burkholderia species of different survival strategies.</title>
        <authorList>
            <person name="Kim H.S."/>
            <person name="Schell M.A."/>
            <person name="Yu Y."/>
            <person name="Ulrich R.L."/>
            <person name="Sarria S.H."/>
            <person name="Nierman W.C."/>
            <person name="DeShazer D."/>
        </authorList>
    </citation>
    <scope>NUCLEOTIDE SEQUENCE [LARGE SCALE GENOMIC DNA]</scope>
    <source>
        <strain>ATCC 700388 / DSM 13276 / CCUG 48851 / CIP 106301 / E264</strain>
    </source>
</reference>
<dbReference type="EC" id="2.8.1.6" evidence="1"/>
<dbReference type="EMBL" id="CP000086">
    <property type="protein sequence ID" value="ABC36299.1"/>
    <property type="status" value="ALT_INIT"/>
    <property type="molecule type" value="Genomic_DNA"/>
</dbReference>
<dbReference type="RefSeq" id="WP_025369635.1">
    <property type="nucleotide sequence ID" value="NZ_CP008785.1"/>
</dbReference>
<dbReference type="SMR" id="Q2T1Q4"/>
<dbReference type="GeneID" id="45120100"/>
<dbReference type="KEGG" id="bte:BTH_I0337"/>
<dbReference type="HOGENOM" id="CLU_033172_1_2_4"/>
<dbReference type="UniPathway" id="UPA00078">
    <property type="reaction ID" value="UER00162"/>
</dbReference>
<dbReference type="Proteomes" id="UP000001930">
    <property type="component" value="Chromosome I"/>
</dbReference>
<dbReference type="GO" id="GO:0051537">
    <property type="term" value="F:2 iron, 2 sulfur cluster binding"/>
    <property type="evidence" value="ECO:0007669"/>
    <property type="project" value="UniProtKB-KW"/>
</dbReference>
<dbReference type="GO" id="GO:0051539">
    <property type="term" value="F:4 iron, 4 sulfur cluster binding"/>
    <property type="evidence" value="ECO:0007669"/>
    <property type="project" value="UniProtKB-KW"/>
</dbReference>
<dbReference type="GO" id="GO:0004076">
    <property type="term" value="F:biotin synthase activity"/>
    <property type="evidence" value="ECO:0007669"/>
    <property type="project" value="UniProtKB-UniRule"/>
</dbReference>
<dbReference type="GO" id="GO:0005506">
    <property type="term" value="F:iron ion binding"/>
    <property type="evidence" value="ECO:0007669"/>
    <property type="project" value="UniProtKB-UniRule"/>
</dbReference>
<dbReference type="GO" id="GO:0009102">
    <property type="term" value="P:biotin biosynthetic process"/>
    <property type="evidence" value="ECO:0007669"/>
    <property type="project" value="UniProtKB-UniRule"/>
</dbReference>
<dbReference type="CDD" id="cd01335">
    <property type="entry name" value="Radical_SAM"/>
    <property type="match status" value="1"/>
</dbReference>
<dbReference type="FunFam" id="3.20.20.70:FF:000011">
    <property type="entry name" value="Biotin synthase"/>
    <property type="match status" value="1"/>
</dbReference>
<dbReference type="Gene3D" id="3.20.20.70">
    <property type="entry name" value="Aldolase class I"/>
    <property type="match status" value="1"/>
</dbReference>
<dbReference type="HAMAP" id="MF_01694">
    <property type="entry name" value="BioB"/>
    <property type="match status" value="1"/>
</dbReference>
<dbReference type="InterPro" id="IPR013785">
    <property type="entry name" value="Aldolase_TIM"/>
</dbReference>
<dbReference type="InterPro" id="IPR010722">
    <property type="entry name" value="BATS_dom"/>
</dbReference>
<dbReference type="InterPro" id="IPR002684">
    <property type="entry name" value="Biotin_synth/BioAB"/>
</dbReference>
<dbReference type="InterPro" id="IPR024177">
    <property type="entry name" value="Biotin_synthase"/>
</dbReference>
<dbReference type="InterPro" id="IPR006638">
    <property type="entry name" value="Elp3/MiaA/NifB-like_rSAM"/>
</dbReference>
<dbReference type="InterPro" id="IPR007197">
    <property type="entry name" value="rSAM"/>
</dbReference>
<dbReference type="NCBIfam" id="TIGR00433">
    <property type="entry name" value="bioB"/>
    <property type="match status" value="1"/>
</dbReference>
<dbReference type="PANTHER" id="PTHR22976">
    <property type="entry name" value="BIOTIN SYNTHASE"/>
    <property type="match status" value="1"/>
</dbReference>
<dbReference type="PANTHER" id="PTHR22976:SF2">
    <property type="entry name" value="BIOTIN SYNTHASE, MITOCHONDRIAL"/>
    <property type="match status" value="1"/>
</dbReference>
<dbReference type="Pfam" id="PF06968">
    <property type="entry name" value="BATS"/>
    <property type="match status" value="1"/>
</dbReference>
<dbReference type="Pfam" id="PF04055">
    <property type="entry name" value="Radical_SAM"/>
    <property type="match status" value="1"/>
</dbReference>
<dbReference type="PIRSF" id="PIRSF001619">
    <property type="entry name" value="Biotin_synth"/>
    <property type="match status" value="1"/>
</dbReference>
<dbReference type="SFLD" id="SFLDF00272">
    <property type="entry name" value="biotin_synthase"/>
    <property type="match status" value="1"/>
</dbReference>
<dbReference type="SFLD" id="SFLDG01278">
    <property type="entry name" value="biotin_synthase_like"/>
    <property type="match status" value="1"/>
</dbReference>
<dbReference type="SMART" id="SM00876">
    <property type="entry name" value="BATS"/>
    <property type="match status" value="1"/>
</dbReference>
<dbReference type="SMART" id="SM00729">
    <property type="entry name" value="Elp3"/>
    <property type="match status" value="1"/>
</dbReference>
<dbReference type="SUPFAM" id="SSF102114">
    <property type="entry name" value="Radical SAM enzymes"/>
    <property type="match status" value="1"/>
</dbReference>
<dbReference type="PROSITE" id="PS51918">
    <property type="entry name" value="RADICAL_SAM"/>
    <property type="match status" value="1"/>
</dbReference>
<comment type="function">
    <text evidence="1">Catalyzes the conversion of dethiobiotin (DTB) to biotin by the insertion of a sulfur atom into dethiobiotin via a radical-based mechanism.</text>
</comment>
<comment type="catalytic activity">
    <reaction evidence="1">
        <text>(4R,5S)-dethiobiotin + (sulfur carrier)-SH + 2 reduced [2Fe-2S]-[ferredoxin] + 2 S-adenosyl-L-methionine = (sulfur carrier)-H + biotin + 2 5'-deoxyadenosine + 2 L-methionine + 2 oxidized [2Fe-2S]-[ferredoxin]</text>
        <dbReference type="Rhea" id="RHEA:22060"/>
        <dbReference type="Rhea" id="RHEA-COMP:10000"/>
        <dbReference type="Rhea" id="RHEA-COMP:10001"/>
        <dbReference type="Rhea" id="RHEA-COMP:14737"/>
        <dbReference type="Rhea" id="RHEA-COMP:14739"/>
        <dbReference type="ChEBI" id="CHEBI:17319"/>
        <dbReference type="ChEBI" id="CHEBI:29917"/>
        <dbReference type="ChEBI" id="CHEBI:33737"/>
        <dbReference type="ChEBI" id="CHEBI:33738"/>
        <dbReference type="ChEBI" id="CHEBI:57586"/>
        <dbReference type="ChEBI" id="CHEBI:57844"/>
        <dbReference type="ChEBI" id="CHEBI:59789"/>
        <dbReference type="ChEBI" id="CHEBI:64428"/>
        <dbReference type="ChEBI" id="CHEBI:149473"/>
        <dbReference type="EC" id="2.8.1.6"/>
    </reaction>
</comment>
<comment type="cofactor">
    <cofactor evidence="1">
        <name>[4Fe-4S] cluster</name>
        <dbReference type="ChEBI" id="CHEBI:49883"/>
    </cofactor>
    <text evidence="1">Binds 1 [4Fe-4S] cluster. The cluster is coordinated with 3 cysteines and an exchangeable S-adenosyl-L-methionine.</text>
</comment>
<comment type="cofactor">
    <cofactor evidence="1">
        <name>[2Fe-2S] cluster</name>
        <dbReference type="ChEBI" id="CHEBI:190135"/>
    </cofactor>
    <text evidence="1">Binds 1 [2Fe-2S] cluster. The cluster is coordinated with 3 cysteines and 1 arginine.</text>
</comment>
<comment type="pathway">
    <text evidence="1">Cofactor biosynthesis; biotin biosynthesis; biotin from 7,8-diaminononanoate: step 2/2.</text>
</comment>
<comment type="subunit">
    <text evidence="1">Homodimer.</text>
</comment>
<comment type="similarity">
    <text evidence="1">Belongs to the radical SAM superfamily. Biotin synthase family.</text>
</comment>
<comment type="sequence caution" evidence="3">
    <conflict type="erroneous initiation">
        <sequence resource="EMBL-CDS" id="ABC36299"/>
    </conflict>
</comment>
<protein>
    <recommendedName>
        <fullName evidence="1">Biotin synthase</fullName>
        <ecNumber evidence="1">2.8.1.6</ecNumber>
    </recommendedName>
</protein>